<comment type="function">
    <text evidence="1">Involved in mRNA degradation. Catalyzes the phosphorolysis of single-stranded polyribonucleotides processively in the 3'- to 5'-direction.</text>
</comment>
<comment type="catalytic activity">
    <reaction evidence="1">
        <text>RNA(n+1) + phosphate = RNA(n) + a ribonucleoside 5'-diphosphate</text>
        <dbReference type="Rhea" id="RHEA:22096"/>
        <dbReference type="Rhea" id="RHEA-COMP:14527"/>
        <dbReference type="Rhea" id="RHEA-COMP:17342"/>
        <dbReference type="ChEBI" id="CHEBI:43474"/>
        <dbReference type="ChEBI" id="CHEBI:57930"/>
        <dbReference type="ChEBI" id="CHEBI:140395"/>
        <dbReference type="EC" id="2.7.7.8"/>
    </reaction>
</comment>
<comment type="cofactor">
    <cofactor evidence="1">
        <name>Mg(2+)</name>
        <dbReference type="ChEBI" id="CHEBI:18420"/>
    </cofactor>
</comment>
<comment type="subcellular location">
    <subcellularLocation>
        <location evidence="1">Cytoplasm</location>
    </subcellularLocation>
</comment>
<comment type="similarity">
    <text evidence="1">Belongs to the polyribonucleotide nucleotidyltransferase family.</text>
</comment>
<dbReference type="EC" id="2.7.7.8" evidence="1"/>
<dbReference type="EMBL" id="CP001291">
    <property type="protein sequence ID" value="ACK69459.1"/>
    <property type="molecule type" value="Genomic_DNA"/>
</dbReference>
<dbReference type="RefSeq" id="WP_012598406.1">
    <property type="nucleotide sequence ID" value="NC_011729.1"/>
</dbReference>
<dbReference type="SMR" id="B7KIQ3"/>
<dbReference type="STRING" id="65393.PCC7424_1005"/>
<dbReference type="KEGG" id="cyc:PCC7424_1005"/>
<dbReference type="eggNOG" id="COG1185">
    <property type="taxonomic scope" value="Bacteria"/>
</dbReference>
<dbReference type="HOGENOM" id="CLU_004217_2_2_3"/>
<dbReference type="OrthoDB" id="9804305at2"/>
<dbReference type="Proteomes" id="UP000002384">
    <property type="component" value="Chromosome"/>
</dbReference>
<dbReference type="GO" id="GO:0005829">
    <property type="term" value="C:cytosol"/>
    <property type="evidence" value="ECO:0007669"/>
    <property type="project" value="TreeGrafter"/>
</dbReference>
<dbReference type="GO" id="GO:0000175">
    <property type="term" value="F:3'-5'-RNA exonuclease activity"/>
    <property type="evidence" value="ECO:0007669"/>
    <property type="project" value="TreeGrafter"/>
</dbReference>
<dbReference type="GO" id="GO:0000287">
    <property type="term" value="F:magnesium ion binding"/>
    <property type="evidence" value="ECO:0007669"/>
    <property type="project" value="UniProtKB-UniRule"/>
</dbReference>
<dbReference type="GO" id="GO:0004654">
    <property type="term" value="F:polyribonucleotide nucleotidyltransferase activity"/>
    <property type="evidence" value="ECO:0007669"/>
    <property type="project" value="UniProtKB-UniRule"/>
</dbReference>
<dbReference type="GO" id="GO:0003723">
    <property type="term" value="F:RNA binding"/>
    <property type="evidence" value="ECO:0007669"/>
    <property type="project" value="UniProtKB-UniRule"/>
</dbReference>
<dbReference type="GO" id="GO:0006402">
    <property type="term" value="P:mRNA catabolic process"/>
    <property type="evidence" value="ECO:0007669"/>
    <property type="project" value="UniProtKB-UniRule"/>
</dbReference>
<dbReference type="GO" id="GO:0006396">
    <property type="term" value="P:RNA processing"/>
    <property type="evidence" value="ECO:0007669"/>
    <property type="project" value="InterPro"/>
</dbReference>
<dbReference type="CDD" id="cd02393">
    <property type="entry name" value="KH-I_PNPase"/>
    <property type="match status" value="1"/>
</dbReference>
<dbReference type="CDD" id="cd11363">
    <property type="entry name" value="RNase_PH_PNPase_1"/>
    <property type="match status" value="1"/>
</dbReference>
<dbReference type="CDD" id="cd11364">
    <property type="entry name" value="RNase_PH_PNPase_2"/>
    <property type="match status" value="1"/>
</dbReference>
<dbReference type="CDD" id="cd04472">
    <property type="entry name" value="S1_PNPase"/>
    <property type="match status" value="1"/>
</dbReference>
<dbReference type="FunFam" id="2.40.50.140:FF:000023">
    <property type="entry name" value="Polyribonucleotide nucleotidyltransferase"/>
    <property type="match status" value="1"/>
</dbReference>
<dbReference type="FunFam" id="3.30.1370.10:FF:000001">
    <property type="entry name" value="Polyribonucleotide nucleotidyltransferase"/>
    <property type="match status" value="1"/>
</dbReference>
<dbReference type="FunFam" id="3.30.230.70:FF:000001">
    <property type="entry name" value="Polyribonucleotide nucleotidyltransferase"/>
    <property type="match status" value="1"/>
</dbReference>
<dbReference type="FunFam" id="3.30.230.70:FF:000002">
    <property type="entry name" value="Polyribonucleotide nucleotidyltransferase"/>
    <property type="match status" value="1"/>
</dbReference>
<dbReference type="Gene3D" id="3.30.230.70">
    <property type="entry name" value="GHMP Kinase, N-terminal domain"/>
    <property type="match status" value="2"/>
</dbReference>
<dbReference type="Gene3D" id="3.30.1370.10">
    <property type="entry name" value="K Homology domain, type 1"/>
    <property type="match status" value="1"/>
</dbReference>
<dbReference type="Gene3D" id="2.40.50.140">
    <property type="entry name" value="Nucleic acid-binding proteins"/>
    <property type="match status" value="1"/>
</dbReference>
<dbReference type="HAMAP" id="MF_01595">
    <property type="entry name" value="PNPase"/>
    <property type="match status" value="1"/>
</dbReference>
<dbReference type="InterPro" id="IPR001247">
    <property type="entry name" value="ExoRNase_PH_dom1"/>
</dbReference>
<dbReference type="InterPro" id="IPR015847">
    <property type="entry name" value="ExoRNase_PH_dom2"/>
</dbReference>
<dbReference type="InterPro" id="IPR036345">
    <property type="entry name" value="ExoRNase_PH_dom2_sf"/>
</dbReference>
<dbReference type="InterPro" id="IPR004087">
    <property type="entry name" value="KH_dom"/>
</dbReference>
<dbReference type="InterPro" id="IPR004088">
    <property type="entry name" value="KH_dom_type_1"/>
</dbReference>
<dbReference type="InterPro" id="IPR036612">
    <property type="entry name" value="KH_dom_type_1_sf"/>
</dbReference>
<dbReference type="InterPro" id="IPR012340">
    <property type="entry name" value="NA-bd_OB-fold"/>
</dbReference>
<dbReference type="InterPro" id="IPR012162">
    <property type="entry name" value="PNPase"/>
</dbReference>
<dbReference type="InterPro" id="IPR027408">
    <property type="entry name" value="PNPase/RNase_PH_dom_sf"/>
</dbReference>
<dbReference type="InterPro" id="IPR015848">
    <property type="entry name" value="PNPase_PH_RNA-bd_bac/org-type"/>
</dbReference>
<dbReference type="InterPro" id="IPR020568">
    <property type="entry name" value="Ribosomal_Su5_D2-typ_SF"/>
</dbReference>
<dbReference type="InterPro" id="IPR003029">
    <property type="entry name" value="S1_domain"/>
</dbReference>
<dbReference type="NCBIfam" id="TIGR03591">
    <property type="entry name" value="polynuc_phos"/>
    <property type="match status" value="1"/>
</dbReference>
<dbReference type="NCBIfam" id="NF008805">
    <property type="entry name" value="PRK11824.1"/>
    <property type="match status" value="1"/>
</dbReference>
<dbReference type="PANTHER" id="PTHR11252">
    <property type="entry name" value="POLYRIBONUCLEOTIDE NUCLEOTIDYLTRANSFERASE"/>
    <property type="match status" value="1"/>
</dbReference>
<dbReference type="PANTHER" id="PTHR11252:SF0">
    <property type="entry name" value="POLYRIBONUCLEOTIDE NUCLEOTIDYLTRANSFERASE 1, MITOCHONDRIAL"/>
    <property type="match status" value="1"/>
</dbReference>
<dbReference type="Pfam" id="PF00013">
    <property type="entry name" value="KH_1"/>
    <property type="match status" value="1"/>
</dbReference>
<dbReference type="Pfam" id="PF03726">
    <property type="entry name" value="PNPase"/>
    <property type="match status" value="1"/>
</dbReference>
<dbReference type="Pfam" id="PF01138">
    <property type="entry name" value="RNase_PH"/>
    <property type="match status" value="2"/>
</dbReference>
<dbReference type="Pfam" id="PF03725">
    <property type="entry name" value="RNase_PH_C"/>
    <property type="match status" value="2"/>
</dbReference>
<dbReference type="Pfam" id="PF00575">
    <property type="entry name" value="S1"/>
    <property type="match status" value="1"/>
</dbReference>
<dbReference type="PIRSF" id="PIRSF005499">
    <property type="entry name" value="PNPase"/>
    <property type="match status" value="1"/>
</dbReference>
<dbReference type="SMART" id="SM00322">
    <property type="entry name" value="KH"/>
    <property type="match status" value="1"/>
</dbReference>
<dbReference type="SMART" id="SM00316">
    <property type="entry name" value="S1"/>
    <property type="match status" value="1"/>
</dbReference>
<dbReference type="SUPFAM" id="SSF54791">
    <property type="entry name" value="Eukaryotic type KH-domain (KH-domain type I)"/>
    <property type="match status" value="1"/>
</dbReference>
<dbReference type="SUPFAM" id="SSF50249">
    <property type="entry name" value="Nucleic acid-binding proteins"/>
    <property type="match status" value="1"/>
</dbReference>
<dbReference type="SUPFAM" id="SSF55666">
    <property type="entry name" value="Ribonuclease PH domain 2-like"/>
    <property type="match status" value="2"/>
</dbReference>
<dbReference type="SUPFAM" id="SSF54211">
    <property type="entry name" value="Ribosomal protein S5 domain 2-like"/>
    <property type="match status" value="2"/>
</dbReference>
<dbReference type="PROSITE" id="PS50084">
    <property type="entry name" value="KH_TYPE_1"/>
    <property type="match status" value="1"/>
</dbReference>
<dbReference type="PROSITE" id="PS50126">
    <property type="entry name" value="S1"/>
    <property type="match status" value="1"/>
</dbReference>
<feature type="chain" id="PRO_1000147912" description="Polyribonucleotide nucleotidyltransferase">
    <location>
        <begin position="1"/>
        <end position="718"/>
    </location>
</feature>
<feature type="domain" description="KH" evidence="1">
    <location>
        <begin position="564"/>
        <end position="623"/>
    </location>
</feature>
<feature type="domain" description="S1 motif" evidence="1">
    <location>
        <begin position="633"/>
        <end position="701"/>
    </location>
</feature>
<feature type="binding site" evidence="1">
    <location>
        <position position="497"/>
    </location>
    <ligand>
        <name>Mg(2+)</name>
        <dbReference type="ChEBI" id="CHEBI:18420"/>
    </ligand>
</feature>
<feature type="binding site" evidence="1">
    <location>
        <position position="503"/>
    </location>
    <ligand>
        <name>Mg(2+)</name>
        <dbReference type="ChEBI" id="CHEBI:18420"/>
    </ligand>
</feature>
<protein>
    <recommendedName>
        <fullName evidence="1">Polyribonucleotide nucleotidyltransferase</fullName>
        <ecNumber evidence="1">2.7.7.8</ecNumber>
    </recommendedName>
    <alternativeName>
        <fullName evidence="1">Polynucleotide phosphorylase</fullName>
        <shortName evidence="1">PNPase</shortName>
    </alternativeName>
</protein>
<organism>
    <name type="scientific">Gloeothece citriformis (strain PCC 7424)</name>
    <name type="common">Cyanothece sp. (strain PCC 7424)</name>
    <dbReference type="NCBI Taxonomy" id="65393"/>
    <lineage>
        <taxon>Bacteria</taxon>
        <taxon>Bacillati</taxon>
        <taxon>Cyanobacteriota</taxon>
        <taxon>Cyanophyceae</taxon>
        <taxon>Oscillatoriophycideae</taxon>
        <taxon>Chroococcales</taxon>
        <taxon>Aphanothecaceae</taxon>
        <taxon>Gloeothece</taxon>
        <taxon>Gloeothece citriformis</taxon>
    </lineage>
</organism>
<keyword id="KW-0963">Cytoplasm</keyword>
<keyword id="KW-0460">Magnesium</keyword>
<keyword id="KW-0479">Metal-binding</keyword>
<keyword id="KW-0548">Nucleotidyltransferase</keyword>
<keyword id="KW-1185">Reference proteome</keyword>
<keyword id="KW-0694">RNA-binding</keyword>
<keyword id="KW-0808">Transferase</keyword>
<gene>
    <name evidence="1" type="primary">pnp</name>
    <name type="ordered locus">PCC7424_1005</name>
</gene>
<accession>B7KIQ3</accession>
<sequence>MEEFDRSISFDGRDIRLKLGLLAPQAGGSVLIQSGDTAVLVTATKAASREGVDFLPLTVDYEERLYAAGRIPGGFLRREGRPPEKAILISRLIDRPLRPLFPHWLRDDIQVIATTLSMDEEVPPDVLAVTGASLAVILAEIPFFGPMAAVRVGLVGDDFIINPTYKEINTGDLDLVVAGSPDGVVMVEAGANQLPEQDIIEAIDFGYEAVRDLIAAQQDVMETLGVKLATLDPPPVNESVLEFIKTQTADEIKKVLSQYDLDKNGRDTALDEIKAAKVEEVIASLPEEDPIKVATTEEAKLVDTLFKDVTKKLMRSQIINEGVRVDGRQLDQVRPISCRVGLLPPRVHGSGLFCRGLTQVLSIATLGTPGDAQELADDLHPEDEKRYLHHYNFPPYSVGETRPMRSPGRREIGHGALAERAILPVLPTQQEFPYVVRVVSEVLSSNGSTSMGSVCGSTLALMDAGVPIIKPVSGAAMGLIKDGDEVRILTDIQGIEDFLGDMDFKVAGTDNGITALQMDMKITGLSMDIVAKAIEQARPARLHILDKMLSVIDSPRPELSPYAPRLLTMRIDPDMIGLVIGPGGKTVKSITEQTKTKIDIDDDGTVTISASEAEQAERAKQLIHNMTRKLNEGEVYVGRVTRIIQIGAFVEIMPGKEGMIHISQLAEGRVGKVEDELAVGDEVVVKVREIDNKGRLNLTRLGIHPDEAAAARKAAALL</sequence>
<proteinExistence type="inferred from homology"/>
<evidence type="ECO:0000255" key="1">
    <source>
        <dbReference type="HAMAP-Rule" id="MF_01595"/>
    </source>
</evidence>
<name>PNP_GLOC7</name>
<reference key="1">
    <citation type="journal article" date="2011" name="MBio">
        <title>Novel metabolic attributes of the genus Cyanothece, comprising a group of unicellular nitrogen-fixing Cyanobacteria.</title>
        <authorList>
            <person name="Bandyopadhyay A."/>
            <person name="Elvitigala T."/>
            <person name="Welsh E."/>
            <person name="Stockel J."/>
            <person name="Liberton M."/>
            <person name="Min H."/>
            <person name="Sherman L.A."/>
            <person name="Pakrasi H.B."/>
        </authorList>
    </citation>
    <scope>NUCLEOTIDE SEQUENCE [LARGE SCALE GENOMIC DNA]</scope>
    <source>
        <strain>PCC 7424</strain>
    </source>
</reference>